<organism>
    <name type="scientific">Mycobacterium marinum (strain ATCC BAA-535 / M)</name>
    <dbReference type="NCBI Taxonomy" id="216594"/>
    <lineage>
        <taxon>Bacteria</taxon>
        <taxon>Bacillati</taxon>
        <taxon>Actinomycetota</taxon>
        <taxon>Actinomycetes</taxon>
        <taxon>Mycobacteriales</taxon>
        <taxon>Mycobacteriaceae</taxon>
        <taxon>Mycobacterium</taxon>
        <taxon>Mycobacterium ulcerans group</taxon>
    </lineage>
</organism>
<comment type="function">
    <text evidence="5">Zn(2+) efflux transporter which is involved in detoxification of zinc during infection.</text>
</comment>
<comment type="catalytic activity">
    <reaction evidence="8">
        <text>Zn(2+)(in) + ATP + H2O = Zn(2+)(out) + ADP + phosphate + H(+)</text>
        <dbReference type="Rhea" id="RHEA:20621"/>
        <dbReference type="ChEBI" id="CHEBI:15377"/>
        <dbReference type="ChEBI" id="CHEBI:15378"/>
        <dbReference type="ChEBI" id="CHEBI:29105"/>
        <dbReference type="ChEBI" id="CHEBI:30616"/>
        <dbReference type="ChEBI" id="CHEBI:43474"/>
        <dbReference type="ChEBI" id="CHEBI:456216"/>
        <dbReference type="EC" id="7.2.2.12"/>
    </reaction>
    <physiologicalReaction direction="left-to-right" evidence="8">
        <dbReference type="Rhea" id="RHEA:20622"/>
    </physiologicalReaction>
</comment>
<comment type="subcellular location">
    <subcellularLocation>
        <location evidence="7">Cell membrane</location>
        <topology evidence="3">Multi-pass membrane protein</topology>
    </subcellularLocation>
</comment>
<comment type="induction">
    <text evidence="5">Induced during infection of D.discoideum and by elevated levels of Zn(2+).</text>
</comment>
<comment type="disruption phenotype">
    <text evidence="5">Deletion of the gene leads to growth inhibition in the presence of elevated levels of Zn(2+), but not Mn(2+) or Cu(2+) (PubMed:33531393). Deletion mutant shows strongly attenuated intracellular growth during D.discoideum infection (PubMed:33531393).</text>
</comment>
<comment type="miscellaneous">
    <text evidence="5">Increasing concentrations of Mn(2+) does not affect the growth of the wild-type strain, nor that of the deletion mutant, excluding that M.marinum CtpC is a manganese exporter as M.tuberculosis CtpC.</text>
</comment>
<comment type="similarity">
    <text evidence="7">Belongs to the cation transport ATPase (P-type) (TC 3.A.3) family. Type IB subfamily.</text>
</comment>
<dbReference type="EC" id="7.2.2.12" evidence="8"/>
<dbReference type="EMBL" id="CP000854">
    <property type="protein sequence ID" value="ACC39729.1"/>
    <property type="molecule type" value="Genomic_DNA"/>
</dbReference>
<dbReference type="RefSeq" id="WP_012393144.1">
    <property type="nucleotide sequence ID" value="NC_010612.1"/>
</dbReference>
<dbReference type="SMR" id="B2HEM2"/>
<dbReference type="STRING" id="216594.MMAR_1271"/>
<dbReference type="KEGG" id="mmi:MMAR_1271"/>
<dbReference type="eggNOG" id="COG2217">
    <property type="taxonomic scope" value="Bacteria"/>
</dbReference>
<dbReference type="HOGENOM" id="CLU_001771_6_3_11"/>
<dbReference type="OrthoDB" id="7059309at2"/>
<dbReference type="Proteomes" id="UP000001190">
    <property type="component" value="Chromosome"/>
</dbReference>
<dbReference type="GO" id="GO:0005886">
    <property type="term" value="C:plasma membrane"/>
    <property type="evidence" value="ECO:0007669"/>
    <property type="project" value="UniProtKB-SubCell"/>
</dbReference>
<dbReference type="GO" id="GO:0005524">
    <property type="term" value="F:ATP binding"/>
    <property type="evidence" value="ECO:0007669"/>
    <property type="project" value="UniProtKB-KW"/>
</dbReference>
<dbReference type="GO" id="GO:0016887">
    <property type="term" value="F:ATP hydrolysis activity"/>
    <property type="evidence" value="ECO:0007669"/>
    <property type="project" value="InterPro"/>
</dbReference>
<dbReference type="GO" id="GO:0005507">
    <property type="term" value="F:copper ion binding"/>
    <property type="evidence" value="ECO:0007669"/>
    <property type="project" value="TreeGrafter"/>
</dbReference>
<dbReference type="GO" id="GO:0043682">
    <property type="term" value="F:P-type divalent copper transporter activity"/>
    <property type="evidence" value="ECO:0007669"/>
    <property type="project" value="TreeGrafter"/>
</dbReference>
<dbReference type="GO" id="GO:0055070">
    <property type="term" value="P:copper ion homeostasis"/>
    <property type="evidence" value="ECO:0007669"/>
    <property type="project" value="TreeGrafter"/>
</dbReference>
<dbReference type="GO" id="GO:0006829">
    <property type="term" value="P:zinc ion transport"/>
    <property type="evidence" value="ECO:0007669"/>
    <property type="project" value="UniProtKB-KW"/>
</dbReference>
<dbReference type="CDD" id="cd02079">
    <property type="entry name" value="P-type_ATPase_HM"/>
    <property type="match status" value="1"/>
</dbReference>
<dbReference type="Gene3D" id="3.40.1110.10">
    <property type="entry name" value="Calcium-transporting ATPase, cytoplasmic domain N"/>
    <property type="match status" value="1"/>
</dbReference>
<dbReference type="Gene3D" id="2.70.150.10">
    <property type="entry name" value="Calcium-transporting ATPase, cytoplasmic transduction domain A"/>
    <property type="match status" value="1"/>
</dbReference>
<dbReference type="Gene3D" id="3.40.50.1000">
    <property type="entry name" value="HAD superfamily/HAD-like"/>
    <property type="match status" value="1"/>
</dbReference>
<dbReference type="InterPro" id="IPR023299">
    <property type="entry name" value="ATPase_P-typ_cyto_dom_N"/>
</dbReference>
<dbReference type="InterPro" id="IPR018303">
    <property type="entry name" value="ATPase_P-typ_P_site"/>
</dbReference>
<dbReference type="InterPro" id="IPR023298">
    <property type="entry name" value="ATPase_P-typ_TM_dom_sf"/>
</dbReference>
<dbReference type="InterPro" id="IPR008250">
    <property type="entry name" value="ATPase_P-typ_transduc_dom_A_sf"/>
</dbReference>
<dbReference type="InterPro" id="IPR036412">
    <property type="entry name" value="HAD-like_sf"/>
</dbReference>
<dbReference type="InterPro" id="IPR023214">
    <property type="entry name" value="HAD_sf"/>
</dbReference>
<dbReference type="InterPro" id="IPR006121">
    <property type="entry name" value="HMA_dom"/>
</dbReference>
<dbReference type="InterPro" id="IPR027256">
    <property type="entry name" value="P-typ_ATPase_IB"/>
</dbReference>
<dbReference type="InterPro" id="IPR001757">
    <property type="entry name" value="P_typ_ATPase"/>
</dbReference>
<dbReference type="InterPro" id="IPR044492">
    <property type="entry name" value="P_typ_ATPase_HD_dom"/>
</dbReference>
<dbReference type="NCBIfam" id="TIGR01511">
    <property type="entry name" value="ATPase-IB1_Cu"/>
    <property type="match status" value="1"/>
</dbReference>
<dbReference type="NCBIfam" id="TIGR01525">
    <property type="entry name" value="ATPase-IB_hvy"/>
    <property type="match status" value="1"/>
</dbReference>
<dbReference type="NCBIfam" id="TIGR01494">
    <property type="entry name" value="ATPase_P-type"/>
    <property type="match status" value="1"/>
</dbReference>
<dbReference type="PANTHER" id="PTHR43520">
    <property type="entry name" value="ATP7, ISOFORM B"/>
    <property type="match status" value="1"/>
</dbReference>
<dbReference type="PANTHER" id="PTHR43520:SF8">
    <property type="entry name" value="P-TYPE CU(+) TRANSPORTER"/>
    <property type="match status" value="1"/>
</dbReference>
<dbReference type="Pfam" id="PF00122">
    <property type="entry name" value="E1-E2_ATPase"/>
    <property type="match status" value="1"/>
</dbReference>
<dbReference type="Pfam" id="PF00702">
    <property type="entry name" value="Hydrolase"/>
    <property type="match status" value="1"/>
</dbReference>
<dbReference type="PRINTS" id="PR00119">
    <property type="entry name" value="CATATPASE"/>
</dbReference>
<dbReference type="SFLD" id="SFLDG00002">
    <property type="entry name" value="C1.7:_P-type_atpase_like"/>
    <property type="match status" value="1"/>
</dbReference>
<dbReference type="SFLD" id="SFLDF00027">
    <property type="entry name" value="p-type_atpase"/>
    <property type="match status" value="1"/>
</dbReference>
<dbReference type="SUPFAM" id="SSF81653">
    <property type="entry name" value="Calcium ATPase, transduction domain A"/>
    <property type="match status" value="1"/>
</dbReference>
<dbReference type="SUPFAM" id="SSF81665">
    <property type="entry name" value="Calcium ATPase, transmembrane domain M"/>
    <property type="match status" value="1"/>
</dbReference>
<dbReference type="SUPFAM" id="SSF56784">
    <property type="entry name" value="HAD-like"/>
    <property type="match status" value="1"/>
</dbReference>
<dbReference type="PROSITE" id="PS00154">
    <property type="entry name" value="ATPASE_E1_E2"/>
    <property type="match status" value="1"/>
</dbReference>
<dbReference type="PROSITE" id="PS50846">
    <property type="entry name" value="HMA_2"/>
    <property type="match status" value="1"/>
</dbReference>
<protein>
    <recommendedName>
        <fullName evidence="7">Zinc-exporting P-type ATPase</fullName>
        <ecNumber evidence="8">7.2.2.12</ecNumber>
    </recommendedName>
    <alternativeName>
        <fullName evidence="6">Zn(2+) efflux pump CtpC</fullName>
    </alternativeName>
</protein>
<accession>B2HEM2</accession>
<feature type="chain" id="PRO_0000455994" description="Zinc-exporting P-type ATPase">
    <location>
        <begin position="1"/>
        <end position="732"/>
    </location>
</feature>
<feature type="transmembrane region" description="Helical" evidence="1">
    <location>
        <begin position="105"/>
        <end position="123"/>
    </location>
</feature>
<feature type="transmembrane region" description="Helical" evidence="1">
    <location>
        <begin position="146"/>
        <end position="164"/>
    </location>
</feature>
<feature type="transmembrane region" description="Helical" evidence="1">
    <location>
        <begin position="172"/>
        <end position="186"/>
    </location>
</feature>
<feature type="transmembrane region" description="Helical" evidence="1">
    <location>
        <begin position="195"/>
        <end position="209"/>
    </location>
</feature>
<feature type="transmembrane region" description="Helical" evidence="1">
    <location>
        <begin position="342"/>
        <end position="366"/>
    </location>
</feature>
<feature type="transmembrane region" description="Helical" evidence="1">
    <location>
        <begin position="372"/>
        <end position="390"/>
    </location>
</feature>
<feature type="transmembrane region" description="Helical" evidence="1">
    <location>
        <begin position="676"/>
        <end position="695"/>
    </location>
</feature>
<feature type="transmembrane region" description="Helical" evidence="1">
    <location>
        <begin position="705"/>
        <end position="724"/>
    </location>
</feature>
<feature type="domain" description="HMA" evidence="4">
    <location>
        <begin position="29"/>
        <end position="96"/>
    </location>
</feature>
<feature type="active site" description="4-aspartylphosphate intermediate" evidence="2">
    <location>
        <position position="423"/>
    </location>
</feature>
<feature type="binding site" evidence="2">
    <location>
        <position position="423"/>
    </location>
    <ligand>
        <name>Mg(2+)</name>
        <dbReference type="ChEBI" id="CHEBI:18420"/>
    </ligand>
</feature>
<feature type="binding site" evidence="2">
    <location>
        <position position="425"/>
    </location>
    <ligand>
        <name>Mg(2+)</name>
        <dbReference type="ChEBI" id="CHEBI:18420"/>
    </ligand>
</feature>
<feature type="binding site" evidence="2">
    <location>
        <position position="625"/>
    </location>
    <ligand>
        <name>Mg(2+)</name>
        <dbReference type="ChEBI" id="CHEBI:18420"/>
    </ligand>
</feature>
<gene>
    <name evidence="6" type="primary">ctpC</name>
    <name evidence="9" type="ordered locus">MMAR_1271</name>
</gene>
<evidence type="ECO:0000250" key="1">
    <source>
        <dbReference type="UniProtKB" id="P9WPT5"/>
    </source>
</evidence>
<evidence type="ECO:0000250" key="2">
    <source>
        <dbReference type="UniProtKB" id="Q5ZWR1"/>
    </source>
</evidence>
<evidence type="ECO:0000255" key="3"/>
<evidence type="ECO:0000255" key="4">
    <source>
        <dbReference type="PROSITE-ProRule" id="PRU00280"/>
    </source>
</evidence>
<evidence type="ECO:0000269" key="5">
    <source>
    </source>
</evidence>
<evidence type="ECO:0000303" key="6">
    <source>
    </source>
</evidence>
<evidence type="ECO:0000305" key="7"/>
<evidence type="ECO:0000305" key="8">
    <source>
    </source>
</evidence>
<evidence type="ECO:0000312" key="9">
    <source>
        <dbReference type="EMBL" id="ACC39729.1"/>
    </source>
</evidence>
<name>CTPC_MYCMM</name>
<sequence length="732" mass="77846">MTLAIVKEVPAGADGDDTTDLVVLSDAAGRMRVRADWVRGNSRRAVAVEEAVAKQDGVRVVHAYPRTGSVVVWYSPRRCDRAAVLEAIGGAKHVAAELIPARAPHSTEIRNTDVLRMVIGGAALALLGVRRYVFARPPLLGPSGRMVATGVTIFTGYPFLRGALRSLRSGKAGTDALVSAATIASLILRENVVALTVLWLLNIGEYLQDLTLRRTRRAISELLRGNQDTAWIRLTDGPEAGTEVQVPIDSVQIGDEVVVHDHVAIPVDGEVVDGEAIVNQSAITGENLPVSVVAGATVHAGSVVVRGRLVVRAQAVGNQTTIGRIITRVEEAQNDRAPIQTVGENFSRRFVPTSFIVSAITLLVTGDVRRAMTMLLIACPCAVGLSTPTAISAAIGNGARRGILIKGGSHLEQAGRVDAIVFDKTGTLTVGRPVVTNIIAMHKDWEPEQVLAYAASSEIHSRHPLAEAVIRSTEERRISIPPHEECEVLVGLGMRTWADGRTLLLGSPSLLESEQVKVSKKASEWVGKLRQQAETPLLLAVDGTLVGLISLRDEVRPEAAEVLTKLRDNGVRRIVMLTGDHPDIAKVVAEELGIDEWRAEVMPEDKLEVVRDLQDEGYVVGMVGDGINDAPALAAADIGIAMGLAGTDVAVETADVALANDDLHRLLDVRDLGGRAVDVIRQNYGMSIAVNAAGLLIGAGGALSPVLAAILHNASSVAVVANSSRLIRYRLE</sequence>
<reference key="1">
    <citation type="journal article" date="2008" name="Genome Res.">
        <title>Insights from the complete genome sequence of Mycobacterium marinum on the evolution of Mycobacterium tuberculosis.</title>
        <authorList>
            <person name="Stinear T.P."/>
            <person name="Seemann T."/>
            <person name="Harrison P.F."/>
            <person name="Jenkin G.A."/>
            <person name="Davies J.K."/>
            <person name="Johnson P.D."/>
            <person name="Abdellah Z."/>
            <person name="Arrowsmith C."/>
            <person name="Chillingworth T."/>
            <person name="Churcher C."/>
            <person name="Clarke K."/>
            <person name="Cronin A."/>
            <person name="Davis P."/>
            <person name="Goodhead I."/>
            <person name="Holroyd N."/>
            <person name="Jagels K."/>
            <person name="Lord A."/>
            <person name="Moule S."/>
            <person name="Mungall K."/>
            <person name="Norbertczak H."/>
            <person name="Quail M.A."/>
            <person name="Rabbinowitsch E."/>
            <person name="Walker D."/>
            <person name="White B."/>
            <person name="Whitehead S."/>
            <person name="Small P.L."/>
            <person name="Brosch R."/>
            <person name="Ramakrishnan L."/>
            <person name="Fischbach M.A."/>
            <person name="Parkhill J."/>
            <person name="Cole S.T."/>
        </authorList>
    </citation>
    <scope>NUCLEOTIDE SEQUENCE [LARGE SCALE GENOMIC DNA]</scope>
    <source>
        <strain>ATCC BAA-535 / M</strain>
    </source>
</reference>
<reference key="2">
    <citation type="journal article" date="2021" name="MBio">
        <title>Zn2+ intoxication of Mycobacterium marinum during Dictyostelium discoideum infection is counteracted by induction of the pathogen Zn2+ exporter CtpC.</title>
        <authorList>
            <person name="Hanna N."/>
            <person name="Koliwer-Brandl H."/>
            <person name="Lefrancois L.H."/>
            <person name="Kalinina V."/>
            <person name="Cardenal-Munoz E."/>
            <person name="Appiah J."/>
            <person name="Leuba F."/>
            <person name="Gueho A."/>
            <person name="Hilbi H."/>
            <person name="Soldati T."/>
            <person name="Barisch C."/>
        </authorList>
    </citation>
    <scope>FUNCTION AS A ZINC EXPORTER</scope>
    <scope>INDUCTION</scope>
    <scope>DISRUPTION PHENOTYPE</scope>
    <source>
        <strain>ATCC BAA-535 / M</strain>
    </source>
</reference>
<proteinExistence type="evidence at protein level"/>
<keyword id="KW-0067">ATP-binding</keyword>
<keyword id="KW-1003">Cell membrane</keyword>
<keyword id="KW-0406">Ion transport</keyword>
<keyword id="KW-0460">Magnesium</keyword>
<keyword id="KW-0472">Membrane</keyword>
<keyword id="KW-0479">Metal-binding</keyword>
<keyword id="KW-0547">Nucleotide-binding</keyword>
<keyword id="KW-1185">Reference proteome</keyword>
<keyword id="KW-1278">Translocase</keyword>
<keyword id="KW-0812">Transmembrane</keyword>
<keyword id="KW-1133">Transmembrane helix</keyword>
<keyword id="KW-0813">Transport</keyword>
<keyword id="KW-0843">Virulence</keyword>
<keyword id="KW-0862">Zinc</keyword>
<keyword id="KW-0864">Zinc transport</keyword>